<dbReference type="EMBL" id="AY057393">
    <property type="protein sequence ID" value="AAL25838.1"/>
    <property type="molecule type" value="mRNA"/>
</dbReference>
<dbReference type="EMBL" id="AC015446">
    <property type="protein sequence ID" value="AAG12539.1"/>
    <property type="molecule type" value="Genomic_DNA"/>
</dbReference>
<dbReference type="EMBL" id="AC079286">
    <property type="protein sequence ID" value="AAG12849.1"/>
    <property type="molecule type" value="Genomic_DNA"/>
</dbReference>
<dbReference type="EMBL" id="CP002684">
    <property type="protein sequence ID" value="AEE31656.1"/>
    <property type="molecule type" value="Genomic_DNA"/>
</dbReference>
<dbReference type="EMBL" id="AF378874">
    <property type="protein sequence ID" value="AAK55677.1"/>
    <property type="molecule type" value="mRNA"/>
</dbReference>
<dbReference type="EMBL" id="AY045977">
    <property type="protein sequence ID" value="AAK76651.1"/>
    <property type="molecule type" value="mRNA"/>
</dbReference>
<dbReference type="EMBL" id="AY050472">
    <property type="protein sequence ID" value="AAK91485.1"/>
    <property type="molecule type" value="mRNA"/>
</dbReference>
<dbReference type="EMBL" id="AY091438">
    <property type="protein sequence ID" value="AAM14377.1"/>
    <property type="molecule type" value="mRNA"/>
</dbReference>
<dbReference type="EMBL" id="AY084529">
    <property type="protein sequence ID" value="AAM61097.1"/>
    <property type="molecule type" value="mRNA"/>
</dbReference>
<dbReference type="PIR" id="G86463">
    <property type="entry name" value="G86463"/>
</dbReference>
<dbReference type="RefSeq" id="NP_564432.3">
    <property type="nucleotide sequence ID" value="NM_103122.4"/>
</dbReference>
<dbReference type="SMR" id="Q9FEC1"/>
<dbReference type="FunCoup" id="Q9FEC1">
    <property type="interactions" value="1584"/>
</dbReference>
<dbReference type="IntAct" id="Q9FEC1">
    <property type="interactions" value="1"/>
</dbReference>
<dbReference type="STRING" id="3702.Q9FEC1"/>
<dbReference type="iPTMnet" id="Q9FEC1"/>
<dbReference type="PaxDb" id="3702-AT1G34000.1"/>
<dbReference type="ProteomicsDB" id="249358"/>
<dbReference type="EnsemblPlants" id="AT1G34000.1">
    <property type="protein sequence ID" value="AT1G34000.1"/>
    <property type="gene ID" value="AT1G34000"/>
</dbReference>
<dbReference type="GeneID" id="840297"/>
<dbReference type="Gramene" id="AT1G34000.1">
    <property type="protein sequence ID" value="AT1G34000.1"/>
    <property type="gene ID" value="AT1G34000"/>
</dbReference>
<dbReference type="KEGG" id="ath:AT1G34000"/>
<dbReference type="Araport" id="AT1G34000"/>
<dbReference type="TAIR" id="AT1G34000">
    <property type="gene designation" value="OHP2"/>
</dbReference>
<dbReference type="eggNOG" id="ENOG502RXUG">
    <property type="taxonomic scope" value="Eukaryota"/>
</dbReference>
<dbReference type="HOGENOM" id="CLU_105635_0_0_1"/>
<dbReference type="InParanoid" id="Q9FEC1"/>
<dbReference type="OMA" id="MQEYFRQ"/>
<dbReference type="OrthoDB" id="2019915at2759"/>
<dbReference type="PhylomeDB" id="Q9FEC1"/>
<dbReference type="PRO" id="PR:Q9FEC1"/>
<dbReference type="Proteomes" id="UP000006548">
    <property type="component" value="Chromosome 1"/>
</dbReference>
<dbReference type="ExpressionAtlas" id="Q9FEC1">
    <property type="expression patterns" value="baseline and differential"/>
</dbReference>
<dbReference type="GO" id="GO:0009507">
    <property type="term" value="C:chloroplast"/>
    <property type="evidence" value="ECO:0007005"/>
    <property type="project" value="TAIR"/>
</dbReference>
<dbReference type="GO" id="GO:0009534">
    <property type="term" value="C:chloroplast thylakoid"/>
    <property type="evidence" value="ECO:0007005"/>
    <property type="project" value="TAIR"/>
</dbReference>
<dbReference type="GO" id="GO:0009535">
    <property type="term" value="C:chloroplast thylakoid membrane"/>
    <property type="evidence" value="ECO:0000314"/>
    <property type="project" value="UniProtKB"/>
</dbReference>
<dbReference type="GO" id="GO:0005634">
    <property type="term" value="C:nucleus"/>
    <property type="evidence" value="ECO:0007005"/>
    <property type="project" value="TAIR"/>
</dbReference>
<dbReference type="GO" id="GO:0010207">
    <property type="term" value="P:photosystem II assembly"/>
    <property type="evidence" value="ECO:0000315"/>
    <property type="project" value="TAIR"/>
</dbReference>
<dbReference type="GO" id="GO:0009642">
    <property type="term" value="P:response to light intensity"/>
    <property type="evidence" value="ECO:0000270"/>
    <property type="project" value="TAIR"/>
</dbReference>
<dbReference type="Gene3D" id="1.10.3460.10">
    <property type="entry name" value="Chlorophyll a/b binding protein domain"/>
    <property type="match status" value="1"/>
</dbReference>
<dbReference type="InterPro" id="IPR053091">
    <property type="entry name" value="PSII_Assembly/Photoprotect-Rel"/>
</dbReference>
<dbReference type="PANTHER" id="PTHR37752">
    <property type="entry name" value="OS02G0610700 PROTEIN"/>
    <property type="match status" value="1"/>
</dbReference>
<dbReference type="PANTHER" id="PTHR37752:SF1">
    <property type="entry name" value="OS02G0610700 PROTEIN"/>
    <property type="match status" value="1"/>
</dbReference>
<dbReference type="SUPFAM" id="SSF103511">
    <property type="entry name" value="Chlorophyll a-b binding protein"/>
    <property type="match status" value="1"/>
</dbReference>
<sequence>MSVASPIQCIRILNPSSSSSSSTASSSFRFSTTTKPCVFIIRCSQTEGPLRRPSAPPTLREPQKPVPPSQPSSSPPPSPPPQKAVAVDGKSVTTVEFQRQKAKELQEYFKQKKLEAAGQGPFFGFQPKNEISNGRWAMFGFAVGMLTEYATGSDLVDQVKILLSNFGILDLE</sequence>
<organism>
    <name type="scientific">Arabidopsis thaliana</name>
    <name type="common">Mouse-ear cress</name>
    <dbReference type="NCBI Taxonomy" id="3702"/>
    <lineage>
        <taxon>Eukaryota</taxon>
        <taxon>Viridiplantae</taxon>
        <taxon>Streptophyta</taxon>
        <taxon>Embryophyta</taxon>
        <taxon>Tracheophyta</taxon>
        <taxon>Spermatophyta</taxon>
        <taxon>Magnoliopsida</taxon>
        <taxon>eudicotyledons</taxon>
        <taxon>Gunneridae</taxon>
        <taxon>Pentapetalae</taxon>
        <taxon>rosids</taxon>
        <taxon>malvids</taxon>
        <taxon>Brassicales</taxon>
        <taxon>Brassicaceae</taxon>
        <taxon>Camelineae</taxon>
        <taxon>Arabidopsis</taxon>
    </lineage>
</organism>
<feature type="transit peptide" description="Chloroplast" evidence="12">
    <location>
        <begin position="1"/>
        <end position="43"/>
    </location>
</feature>
<feature type="chain" id="PRO_0000437946" description="Light-harvesting complex-like protein OHP2, chloroplastic">
    <location>
        <begin position="44"/>
        <end position="172"/>
    </location>
</feature>
<feature type="topological domain" description="Stromal" evidence="3 6">
    <location>
        <begin position="44"/>
        <end position="135"/>
    </location>
</feature>
<feature type="transmembrane region" description="Helical" evidence="1">
    <location>
        <begin position="136"/>
        <end position="156"/>
    </location>
</feature>
<feature type="topological domain" description="Lumenal" evidence="3 6">
    <location>
        <begin position="157"/>
        <end position="172"/>
    </location>
</feature>
<feature type="region of interest" description="Disordered" evidence="2">
    <location>
        <begin position="45"/>
        <end position="90"/>
    </location>
</feature>
<feature type="compositionally biased region" description="Pro residues" evidence="2">
    <location>
        <begin position="64"/>
        <end position="82"/>
    </location>
</feature>
<feature type="mutagenesis site" description="Abolishes chlorophyll binding of OHP1 and OHP2 heterodimer; when associated with A-133 and A-135." evidence="9">
    <original>E</original>
    <variation>A</variation>
    <location>
        <position position="130"/>
    </location>
</feature>
<feature type="mutagenesis site" description="Abolishes chlorophyll binding of OHP1 and OHP2 heterodimer; when associated with A-130 and A-135." evidence="9">
    <original>N</original>
    <variation>A</variation>
    <location>
        <position position="133"/>
    </location>
</feature>
<feature type="mutagenesis site" description="Abolishes chlorophyll binding of OHP1 and OHP2 heterodimer; when associated with A-130 and A-133." evidence="9">
    <original>R</original>
    <variation>A</variation>
    <location>
        <position position="135"/>
    </location>
</feature>
<feature type="sequence conflict" description="In Ref. 5; AAM61097." evidence="12" ref="5">
    <original>T</original>
    <variation>A</variation>
    <location>
        <position position="58"/>
    </location>
</feature>
<feature type="sequence conflict" description="In Ref. 5; AAM61097." evidence="12" ref="5">
    <original>P</original>
    <variation>A</variation>
    <location>
        <position position="68"/>
    </location>
</feature>
<feature type="sequence conflict" description="In Ref. 5; AAM61097." evidence="12" ref="5">
    <location>
        <position position="78"/>
    </location>
</feature>
<feature type="sequence conflict" description="In Ref. 5; AAM61097." evidence="12" ref="5">
    <original>AVAV</original>
    <variation>SVAI</variation>
    <location>
        <begin position="84"/>
        <end position="87"/>
    </location>
</feature>
<gene>
    <name evidence="10" type="primary">OHP2</name>
    <name evidence="11" type="synonym">LIL6</name>
    <name evidence="13 16" type="ordered locus">At1g34000</name>
    <name evidence="14" type="ORF">F12G12.18</name>
    <name evidence="15" type="ORF">T15K4.5</name>
</gene>
<protein>
    <recommendedName>
        <fullName evidence="12">Light-harvesting complex-like protein OHP2, chloroplastic</fullName>
    </recommendedName>
    <alternativeName>
        <fullName evidence="10">One-helix protein 2</fullName>
    </alternativeName>
    <alternativeName>
        <fullName evidence="11">Protein LIGHT-HARVESTING LIKE 6</fullName>
    </alternativeName>
</protein>
<keyword id="KW-0150">Chloroplast</keyword>
<keyword id="KW-0472">Membrane</keyword>
<keyword id="KW-0934">Plastid</keyword>
<keyword id="KW-1185">Reference proteome</keyword>
<keyword id="KW-0793">Thylakoid</keyword>
<keyword id="KW-0809">Transit peptide</keyword>
<keyword id="KW-0812">Transmembrane</keyword>
<keyword id="KW-1133">Transmembrane helix</keyword>
<accession>Q9FEC1</accession>
<accession>Q8LG09</accession>
<comment type="function">
    <text evidence="3 5 6 8 9">May play a photoprotective role within PSI in response to light stress (PubMed:12805611). Forms a trimeric complex with OHP1 and HCF244 that is required to promote PSII core subunit assembly (PubMed:29930106, PubMed:30397023). The trimeric complex forms a transient PSII reaction center-like complex with PsbA, PsbD, PsbE, PsbF and PsbI subunits in thylakoids for early assembly of PSII as well as PSII repair (PubMed:30397023). The trimeric complex is required for the recruitment of ribosomes to the psbA mRNA during PSII biogenesis and repair (PubMed:31991763). Forms a heterodimer with OHP1 that binds chlorophylls and carotenoids, and that may function in the delivery of pigments to the PsbA subunit of PSII (PubMed:32071152).</text>
</comment>
<comment type="subunit">
    <text evidence="4 5 6">Component of a high molecular weight complex containing OHP1, OHP2 and HCF244, and PSII core proteins D1/D2, HCF136 and HCF173 (PubMed:29438089). Forms a trimeric complex with OHP1 and HCF244 that mutually stabilizes each subunit (PubMed:29930106, PubMed:30397023).</text>
</comment>
<comment type="subcellular location">
    <subcellularLocation>
        <location evidence="3 4 6">Plastid</location>
        <location evidence="3 4 6">Chloroplast thylakoid membrane</location>
        <topology evidence="1">Single-pass membrane protein</topology>
    </subcellularLocation>
    <text evidence="3">Associates with PSI under low or high light conditions.</text>
</comment>
<comment type="induction">
    <text evidence="3 7">Induced by exposure to high light.</text>
</comment>
<comment type="disruption phenotype">
    <text evidence="4">High light sensitivity leading to stunted growth with pale-green leaves on agar plates, but unable to grow on soil.</text>
</comment>
<comment type="similarity">
    <text evidence="12">Belongs to the ELIP/psbS family.</text>
</comment>
<reference key="1">
    <citation type="journal article" date="2003" name="Plant Physiol.">
        <title>Light stress-induced one-helix protein of the chlorophyll a/b-binding family associated with photosystem I.</title>
        <authorList>
            <person name="Andersson U."/>
            <person name="Heddad M."/>
            <person name="Adamska I."/>
        </authorList>
    </citation>
    <scope>NUCLEOTIDE SEQUENCE [MRNA]</scope>
    <scope>FUNCTION</scope>
    <scope>SUBCELLULAR LOCATION</scope>
    <scope>TOPOLOGY</scope>
    <scope>INDUCTION BY HIGH LIGHT</scope>
</reference>
<reference key="2">
    <citation type="journal article" date="2000" name="Nature">
        <title>Sequence and analysis of chromosome 1 of the plant Arabidopsis thaliana.</title>
        <authorList>
            <person name="Theologis A."/>
            <person name="Ecker J.R."/>
            <person name="Palm C.J."/>
            <person name="Federspiel N.A."/>
            <person name="Kaul S."/>
            <person name="White O."/>
            <person name="Alonso J."/>
            <person name="Altafi H."/>
            <person name="Araujo R."/>
            <person name="Bowman C.L."/>
            <person name="Brooks S.Y."/>
            <person name="Buehler E."/>
            <person name="Chan A."/>
            <person name="Chao Q."/>
            <person name="Chen H."/>
            <person name="Cheuk R.F."/>
            <person name="Chin C.W."/>
            <person name="Chung M.K."/>
            <person name="Conn L."/>
            <person name="Conway A.B."/>
            <person name="Conway A.R."/>
            <person name="Creasy T.H."/>
            <person name="Dewar K."/>
            <person name="Dunn P."/>
            <person name="Etgu P."/>
            <person name="Feldblyum T.V."/>
            <person name="Feng J.-D."/>
            <person name="Fong B."/>
            <person name="Fujii C.Y."/>
            <person name="Gill J.E."/>
            <person name="Goldsmith A.D."/>
            <person name="Haas B."/>
            <person name="Hansen N.F."/>
            <person name="Hughes B."/>
            <person name="Huizar L."/>
            <person name="Hunter J.L."/>
            <person name="Jenkins J."/>
            <person name="Johnson-Hopson C."/>
            <person name="Khan S."/>
            <person name="Khaykin E."/>
            <person name="Kim C.J."/>
            <person name="Koo H.L."/>
            <person name="Kremenetskaia I."/>
            <person name="Kurtz D.B."/>
            <person name="Kwan A."/>
            <person name="Lam B."/>
            <person name="Langin-Hooper S."/>
            <person name="Lee A."/>
            <person name="Lee J.M."/>
            <person name="Lenz C.A."/>
            <person name="Li J.H."/>
            <person name="Li Y.-P."/>
            <person name="Lin X."/>
            <person name="Liu S.X."/>
            <person name="Liu Z.A."/>
            <person name="Luros J.S."/>
            <person name="Maiti R."/>
            <person name="Marziali A."/>
            <person name="Militscher J."/>
            <person name="Miranda M."/>
            <person name="Nguyen M."/>
            <person name="Nierman W.C."/>
            <person name="Osborne B.I."/>
            <person name="Pai G."/>
            <person name="Peterson J."/>
            <person name="Pham P.K."/>
            <person name="Rizzo M."/>
            <person name="Rooney T."/>
            <person name="Rowley D."/>
            <person name="Sakano H."/>
            <person name="Salzberg S.L."/>
            <person name="Schwartz J.R."/>
            <person name="Shinn P."/>
            <person name="Southwick A.M."/>
            <person name="Sun H."/>
            <person name="Tallon L.J."/>
            <person name="Tambunga G."/>
            <person name="Toriumi M.J."/>
            <person name="Town C.D."/>
            <person name="Utterback T."/>
            <person name="Van Aken S."/>
            <person name="Vaysberg M."/>
            <person name="Vysotskaia V.S."/>
            <person name="Walker M."/>
            <person name="Wu D."/>
            <person name="Yu G."/>
            <person name="Fraser C.M."/>
            <person name="Venter J.C."/>
            <person name="Davis R.W."/>
        </authorList>
    </citation>
    <scope>NUCLEOTIDE SEQUENCE [LARGE SCALE GENOMIC DNA]</scope>
    <source>
        <strain>cv. Columbia</strain>
    </source>
</reference>
<reference key="3">
    <citation type="journal article" date="2017" name="Plant J.">
        <title>Araport11: a complete reannotation of the Arabidopsis thaliana reference genome.</title>
        <authorList>
            <person name="Cheng C.Y."/>
            <person name="Krishnakumar V."/>
            <person name="Chan A.P."/>
            <person name="Thibaud-Nissen F."/>
            <person name="Schobel S."/>
            <person name="Town C.D."/>
        </authorList>
    </citation>
    <scope>GENOME REANNOTATION</scope>
    <source>
        <strain>cv. Columbia</strain>
    </source>
</reference>
<reference key="4">
    <citation type="journal article" date="2003" name="Science">
        <title>Empirical analysis of transcriptional activity in the Arabidopsis genome.</title>
        <authorList>
            <person name="Yamada K."/>
            <person name="Lim J."/>
            <person name="Dale J.M."/>
            <person name="Chen H."/>
            <person name="Shinn P."/>
            <person name="Palm C.J."/>
            <person name="Southwick A.M."/>
            <person name="Wu H.C."/>
            <person name="Kim C.J."/>
            <person name="Nguyen M."/>
            <person name="Pham P.K."/>
            <person name="Cheuk R.F."/>
            <person name="Karlin-Newmann G."/>
            <person name="Liu S.X."/>
            <person name="Lam B."/>
            <person name="Sakano H."/>
            <person name="Wu T."/>
            <person name="Yu G."/>
            <person name="Miranda M."/>
            <person name="Quach H.L."/>
            <person name="Tripp M."/>
            <person name="Chang C.H."/>
            <person name="Lee J.M."/>
            <person name="Toriumi M.J."/>
            <person name="Chan M.M."/>
            <person name="Tang C.C."/>
            <person name="Onodera C.S."/>
            <person name="Deng J.M."/>
            <person name="Akiyama K."/>
            <person name="Ansari Y."/>
            <person name="Arakawa T."/>
            <person name="Banh J."/>
            <person name="Banno F."/>
            <person name="Bowser L."/>
            <person name="Brooks S.Y."/>
            <person name="Carninci P."/>
            <person name="Chao Q."/>
            <person name="Choy N."/>
            <person name="Enju A."/>
            <person name="Goldsmith A.D."/>
            <person name="Gurjal M."/>
            <person name="Hansen N.F."/>
            <person name="Hayashizaki Y."/>
            <person name="Johnson-Hopson C."/>
            <person name="Hsuan V.W."/>
            <person name="Iida K."/>
            <person name="Karnes M."/>
            <person name="Khan S."/>
            <person name="Koesema E."/>
            <person name="Ishida J."/>
            <person name="Jiang P.X."/>
            <person name="Jones T."/>
            <person name="Kawai J."/>
            <person name="Kamiya A."/>
            <person name="Meyers C."/>
            <person name="Nakajima M."/>
            <person name="Narusaka M."/>
            <person name="Seki M."/>
            <person name="Sakurai T."/>
            <person name="Satou M."/>
            <person name="Tamse R."/>
            <person name="Vaysberg M."/>
            <person name="Wallender E.K."/>
            <person name="Wong C."/>
            <person name="Yamamura Y."/>
            <person name="Yuan S."/>
            <person name="Shinozaki K."/>
            <person name="Davis R.W."/>
            <person name="Theologis A."/>
            <person name="Ecker J.R."/>
        </authorList>
    </citation>
    <scope>NUCLEOTIDE SEQUENCE [LARGE SCALE MRNA]</scope>
    <source>
        <strain>cv. Columbia</strain>
    </source>
</reference>
<reference key="5">
    <citation type="submission" date="2002-03" db="EMBL/GenBank/DDBJ databases">
        <title>Full-length cDNA from Arabidopsis thaliana.</title>
        <authorList>
            <person name="Brover V.V."/>
            <person name="Troukhan M.E."/>
            <person name="Alexandrov N.A."/>
            <person name="Lu Y.-P."/>
            <person name="Flavell R.B."/>
            <person name="Feldmann K.A."/>
        </authorList>
    </citation>
    <scope>NUCLEOTIDE SEQUENCE [LARGE SCALE MRNA]</scope>
</reference>
<reference key="6">
    <citation type="journal article" date="2018" name="Plant Physiol.">
        <title>Stable accumulation of photosystem II requires ONE-HELIX PROTEIN1 (OHP1) of the light harvesting-like family.</title>
        <authorList>
            <person name="Myouga F."/>
            <person name="Takahashi K."/>
            <person name="Tanaka R."/>
            <person name="Nagata N."/>
            <person name="Kiss A.Z."/>
            <person name="Funk C."/>
            <person name="Nomura Y."/>
            <person name="Nakagami H."/>
            <person name="Jansson S."/>
            <person name="Shinozaki K."/>
        </authorList>
    </citation>
    <scope>FUNCTION</scope>
    <scope>DISRUPTION PHENOTYPE</scope>
    <scope>SUBCELLULAR LOCATION</scope>
    <scope>SUBUNIT</scope>
    <source>
        <strain>cv. Columbia</strain>
    </source>
</reference>
<reference key="7">
    <citation type="journal article" date="2018" name="Plant Signal. Behav.">
        <title>Requirement of ONE-HELIX PROTEIN 1 (OHP1) in early Arabidopsis seedling development and under high light intensity.</title>
        <authorList>
            <person name="Hey D."/>
            <person name="Grimm B."/>
        </authorList>
    </citation>
    <scope>INDUCTION BY HIGH LIGHT</scope>
</reference>
<reference key="8">
    <citation type="journal article" date="2018" name="Plant Physiol.">
        <title>ONE-HELIX PROTEIN2 (OHP2) is required for the stability of OHP1 and assembly factor HCF244 and is functionally linked to PSII biogenesis.</title>
        <authorList>
            <person name="Hey D."/>
            <person name="Grimm B."/>
        </authorList>
    </citation>
    <scope>FUNCTION</scope>
    <scope>INTERACTION WITH OHP1 AND HCF244</scope>
</reference>
<reference key="9">
    <citation type="journal article" date="2019" name="Plant Physiol.">
        <title>OHP1, OHP2, and HCF244 form a transient functional complex with the photosystem II reaction center.</title>
        <authorList>
            <person name="Li Y."/>
            <person name="Liu B."/>
            <person name="Zhang J."/>
            <person name="Kong F."/>
            <person name="Zhang L."/>
            <person name="Meng H."/>
            <person name="Li W."/>
            <person name="Rochaix J.D."/>
            <person name="Li D."/>
            <person name="Peng L."/>
        </authorList>
    </citation>
    <scope>FUNCTION</scope>
    <scope>INTERACTION WITH OHP1 AND HCF244</scope>
    <scope>SUBCELLULAR LOCATION</scope>
    <scope>TOPOLOGY</scope>
</reference>
<reference key="10">
    <citation type="journal article" date="2020" name="Plant Physiol.">
        <title>ONE-HELIX PROTEIN1 and 2 form heterodimers to bind chlorophyll in photosystem II biogenesis.</title>
        <authorList>
            <person name="Hey D."/>
            <person name="Grimm B."/>
        </authorList>
    </citation>
    <scope>FUNCTION</scope>
    <scope>MUTAGENESIS OF GLU-130; ASN-133 AND ARG-135</scope>
</reference>
<reference key="11">
    <citation type="journal article" date="2020" name="Plants (Basel)">
        <title>Exploring the Link between Photosystem II Assembly and Translation of the Chloroplast psbA mRNA.</title>
        <authorList>
            <person name="Chotewutmontri P."/>
            <person name="Williams-Carrier R."/>
            <person name="Barkan A."/>
        </authorList>
    </citation>
    <scope>FUNCTION</scope>
</reference>
<name>OHP2_ARATH</name>
<proteinExistence type="evidence at protein level"/>
<evidence type="ECO:0000255" key="1"/>
<evidence type="ECO:0000256" key="2">
    <source>
        <dbReference type="SAM" id="MobiDB-lite"/>
    </source>
</evidence>
<evidence type="ECO:0000269" key="3">
    <source>
    </source>
</evidence>
<evidence type="ECO:0000269" key="4">
    <source>
    </source>
</evidence>
<evidence type="ECO:0000269" key="5">
    <source>
    </source>
</evidence>
<evidence type="ECO:0000269" key="6">
    <source>
    </source>
</evidence>
<evidence type="ECO:0000269" key="7">
    <source>
    </source>
</evidence>
<evidence type="ECO:0000269" key="8">
    <source>
    </source>
</evidence>
<evidence type="ECO:0000269" key="9">
    <source>
    </source>
</evidence>
<evidence type="ECO:0000303" key="10">
    <source>
    </source>
</evidence>
<evidence type="ECO:0000303" key="11">
    <source>
    </source>
</evidence>
<evidence type="ECO:0000305" key="12"/>
<evidence type="ECO:0000312" key="13">
    <source>
        <dbReference type="Araport" id="AT1G34000"/>
    </source>
</evidence>
<evidence type="ECO:0000312" key="14">
    <source>
        <dbReference type="EMBL" id="AAG12539.1"/>
    </source>
</evidence>
<evidence type="ECO:0000312" key="15">
    <source>
        <dbReference type="EMBL" id="AAG12849.1"/>
    </source>
</evidence>
<evidence type="ECO:0000312" key="16">
    <source>
        <dbReference type="EMBL" id="AEE31656.1"/>
    </source>
</evidence>